<sequence length="242" mass="25318">MTMATPFSGAANSIVAARTVLITGVSKGLGRALALELAKRGHTVIGCARSQEKLTALQSELSSSTNHLLLTADVKSNSSVEEMAHTIVEKKGVPDIIVNNAGTINKNSKIWEVSAEDFDNVMDTNVKGVANVLRHFIPLMLPRKQGIIVNMSSGWGRSGAALVAPYCASKWAIEGLSRAVAKEVVEGMAVVALNPGVINTELLTSCFGNSASLYQAPDAWAVKAATMILNLTAGDNGGSLTV</sequence>
<evidence type="ECO:0000250" key="1">
    <source>
        <dbReference type="UniProtKB" id="Q7Z4W1"/>
    </source>
</evidence>
<evidence type="ECO:0000255" key="2">
    <source>
        <dbReference type="PROSITE-ProRule" id="PRU10001"/>
    </source>
</evidence>
<evidence type="ECO:0000269" key="3">
    <source>
    </source>
</evidence>
<evidence type="ECO:0000303" key="4">
    <source>
    </source>
</evidence>
<evidence type="ECO:0000305" key="5"/>
<evidence type="ECO:0000305" key="6">
    <source>
    </source>
</evidence>
<evidence type="ECO:0000305" key="7">
    <source>
    </source>
</evidence>
<evidence type="ECO:0000312" key="8">
    <source>
        <dbReference type="Araport" id="AT1G10310"/>
    </source>
</evidence>
<evidence type="ECO:0000312" key="9">
    <source>
        <dbReference type="EMBL" id="AAD32881.1"/>
    </source>
</evidence>
<evidence type="ECO:0000312" key="10">
    <source>
        <dbReference type="Proteomes" id="UP000006548"/>
    </source>
</evidence>
<evidence type="ECO:0007744" key="11">
    <source>
    </source>
</evidence>
<proteinExistence type="evidence at protein level"/>
<comment type="function">
    <text evidence="3 6">NADPH-dependent pterin aldehyde reductase involved in pterin aldehyde salvage during folate turnover. Catalyzes the reduction of diverse aromatic and aliphatic aldehydes (e.g. acetaldehyde, n-propanal, 1-naphthaldehyde, benzaldehyde, cinnamaldehyde, n-butanal, n-hexanal, n-pentanal, 2-naphthaldehyde, n-octanal, n-nonanal and n-heptanal), in addition to the conversion of pterin-6-aldehyde (PtCHO) to 6-hydroxymethylpterin (PtCH(2)OH), and the conversion of dihydropterin-6-aldehyde (H(2)PtCHO) to 6-hydroxymethyldihydropterin (H(2)PtCH(2)OH) (PubMed:17550420). Cannot reduce the pterin ring (PubMed:17220358).</text>
</comment>
<comment type="biophysicochemical properties">
    <kinetics>
        <KM evidence="3">36 uM for pterin-6-aldehyde</KM>
        <KM evidence="3">56 uM for dihydropterin-6-aldehyde</KM>
        <KM evidence="3">1.9 uM for NADPH</KM>
        <KM evidence="3">2.3 mM for NADH</KM>
        <Vmax evidence="3">212.0 nmol/min/mg enzyme with pterin-6-aldehyde as substrate</Vmax>
        <Vmax evidence="3">343.0 nmol/min/mg enzyme with dihydropterin-6-aldehyde as substrate</Vmax>
        <text evidence="3">Cold-active enzyme with an unusually high activity with dihydropterin-6-aldehyde as substrate at 0 degrees Celsius.</text>
    </kinetics>
    <phDependence>
        <text evidence="3">Optimum pH is 7.5, with half-maximal activity at pH 6.0 and 8.3.</text>
    </phDependence>
</comment>
<comment type="subunit">
    <text evidence="3">Homodimer.</text>
</comment>
<comment type="subcellular location">
    <subcellularLocation>
        <location evidence="7">Cytoplasm</location>
    </subcellularLocation>
</comment>
<comment type="tissue specificity">
    <text evidence="3">Mostly expressed in seeds, and, to a lower extent, in roots, leaves, flowers and siliques.</text>
</comment>
<comment type="disruption phenotype">
    <text evidence="3">Slight reduction in seed pterin aldehyde reductase activity, especially at low temperature.</text>
</comment>
<comment type="similarity">
    <text evidence="5">Belongs to the short-chain dehydrogenases/reductases (SDR) family.</text>
</comment>
<comment type="sequence caution" evidence="5">
    <conflict type="erroneous initiation">
        <sequence resource="EMBL-CDS" id="AAM65520"/>
    </conflict>
    <text>Truncated N-terminus.</text>
</comment>
<protein>
    <recommendedName>
        <fullName evidence="4">NADPH-dependent pterin aldehyde reductase</fullName>
        <ecNumber evidence="7">1.1.1.-</ecNumber>
    </recommendedName>
</protein>
<feature type="initiator methionine" description="Removed" evidence="11">
    <location>
        <position position="1"/>
    </location>
</feature>
<feature type="chain" id="PRO_0000431387" description="NADPH-dependent pterin aldehyde reductase">
    <location>
        <begin position="2"/>
        <end position="242"/>
    </location>
</feature>
<feature type="active site" description="Proton acceptor" evidence="2">
    <location>
        <position position="166"/>
    </location>
</feature>
<feature type="binding site" evidence="1">
    <location>
        <begin position="21"/>
        <end position="50"/>
    </location>
    <ligand>
        <name>NADP(+)</name>
        <dbReference type="ChEBI" id="CHEBI:58349"/>
    </ligand>
</feature>
<feature type="binding site" evidence="1">
    <location>
        <position position="153"/>
    </location>
    <ligand>
        <name>substrate</name>
    </ligand>
</feature>
<feature type="binding site" evidence="1">
    <location>
        <position position="170"/>
    </location>
    <ligand>
        <name>NADP(+)</name>
        <dbReference type="ChEBI" id="CHEBI:58349"/>
    </ligand>
</feature>
<feature type="modified residue" description="N-acetylthreonine" evidence="11">
    <location>
        <position position="2"/>
    </location>
</feature>
<organism evidence="10">
    <name type="scientific">Arabidopsis thaliana</name>
    <name type="common">Mouse-ear cress</name>
    <dbReference type="NCBI Taxonomy" id="3702"/>
    <lineage>
        <taxon>Eukaryota</taxon>
        <taxon>Viridiplantae</taxon>
        <taxon>Streptophyta</taxon>
        <taxon>Embryophyta</taxon>
        <taxon>Tracheophyta</taxon>
        <taxon>Spermatophyta</taxon>
        <taxon>Magnoliopsida</taxon>
        <taxon>eudicotyledons</taxon>
        <taxon>Gunneridae</taxon>
        <taxon>Pentapetalae</taxon>
        <taxon>rosids</taxon>
        <taxon>malvids</taxon>
        <taxon>Brassicales</taxon>
        <taxon>Brassicaceae</taxon>
        <taxon>Camelineae</taxon>
        <taxon>Arabidopsis</taxon>
    </lineage>
</organism>
<reference key="1">
    <citation type="journal article" date="2000" name="Nature">
        <title>Sequence and analysis of chromosome 1 of the plant Arabidopsis thaliana.</title>
        <authorList>
            <person name="Theologis A."/>
            <person name="Ecker J.R."/>
            <person name="Palm C.J."/>
            <person name="Federspiel N.A."/>
            <person name="Kaul S."/>
            <person name="White O."/>
            <person name="Alonso J."/>
            <person name="Altafi H."/>
            <person name="Araujo R."/>
            <person name="Bowman C.L."/>
            <person name="Brooks S.Y."/>
            <person name="Buehler E."/>
            <person name="Chan A."/>
            <person name="Chao Q."/>
            <person name="Chen H."/>
            <person name="Cheuk R.F."/>
            <person name="Chin C.W."/>
            <person name="Chung M.K."/>
            <person name="Conn L."/>
            <person name="Conway A.B."/>
            <person name="Conway A.R."/>
            <person name="Creasy T.H."/>
            <person name="Dewar K."/>
            <person name="Dunn P."/>
            <person name="Etgu P."/>
            <person name="Feldblyum T.V."/>
            <person name="Feng J.-D."/>
            <person name="Fong B."/>
            <person name="Fujii C.Y."/>
            <person name="Gill J.E."/>
            <person name="Goldsmith A.D."/>
            <person name="Haas B."/>
            <person name="Hansen N.F."/>
            <person name="Hughes B."/>
            <person name="Huizar L."/>
            <person name="Hunter J.L."/>
            <person name="Jenkins J."/>
            <person name="Johnson-Hopson C."/>
            <person name="Khan S."/>
            <person name="Khaykin E."/>
            <person name="Kim C.J."/>
            <person name="Koo H.L."/>
            <person name="Kremenetskaia I."/>
            <person name="Kurtz D.B."/>
            <person name="Kwan A."/>
            <person name="Lam B."/>
            <person name="Langin-Hooper S."/>
            <person name="Lee A."/>
            <person name="Lee J.M."/>
            <person name="Lenz C.A."/>
            <person name="Li J.H."/>
            <person name="Li Y.-P."/>
            <person name="Lin X."/>
            <person name="Liu S.X."/>
            <person name="Liu Z.A."/>
            <person name="Luros J.S."/>
            <person name="Maiti R."/>
            <person name="Marziali A."/>
            <person name="Militscher J."/>
            <person name="Miranda M."/>
            <person name="Nguyen M."/>
            <person name="Nierman W.C."/>
            <person name="Osborne B.I."/>
            <person name="Pai G."/>
            <person name="Peterson J."/>
            <person name="Pham P.K."/>
            <person name="Rizzo M."/>
            <person name="Rooney T."/>
            <person name="Rowley D."/>
            <person name="Sakano H."/>
            <person name="Salzberg S.L."/>
            <person name="Schwartz J.R."/>
            <person name="Shinn P."/>
            <person name="Southwick A.M."/>
            <person name="Sun H."/>
            <person name="Tallon L.J."/>
            <person name="Tambunga G."/>
            <person name="Toriumi M.J."/>
            <person name="Town C.D."/>
            <person name="Utterback T."/>
            <person name="Van Aken S."/>
            <person name="Vaysberg M."/>
            <person name="Vysotskaia V.S."/>
            <person name="Walker M."/>
            <person name="Wu D."/>
            <person name="Yu G."/>
            <person name="Fraser C.M."/>
            <person name="Venter J.C."/>
            <person name="Davis R.W."/>
        </authorList>
    </citation>
    <scope>NUCLEOTIDE SEQUENCE [LARGE SCALE GENOMIC DNA]</scope>
    <source>
        <strain>cv. Columbia</strain>
    </source>
</reference>
<reference key="2">
    <citation type="journal article" date="2017" name="Plant J.">
        <title>Araport11: a complete reannotation of the Arabidopsis thaliana reference genome.</title>
        <authorList>
            <person name="Cheng C.Y."/>
            <person name="Krishnakumar V."/>
            <person name="Chan A.P."/>
            <person name="Thibaud-Nissen F."/>
            <person name="Schobel S."/>
            <person name="Town C.D."/>
        </authorList>
    </citation>
    <scope>GENOME REANNOTATION</scope>
    <source>
        <strain>cv. Columbia</strain>
    </source>
</reference>
<reference key="3">
    <citation type="submission" date="2004-09" db="EMBL/GenBank/DDBJ databases">
        <title>Large-scale analysis of RIKEN Arabidopsis full-length (RAFL) cDNAs.</title>
        <authorList>
            <person name="Totoki Y."/>
            <person name="Seki M."/>
            <person name="Ishida J."/>
            <person name="Nakajima M."/>
            <person name="Enju A."/>
            <person name="Kamiya A."/>
            <person name="Narusaka M."/>
            <person name="Shin-i T."/>
            <person name="Nakagawa M."/>
            <person name="Sakamoto N."/>
            <person name="Oishi K."/>
            <person name="Kohara Y."/>
            <person name="Kobayashi M."/>
            <person name="Toyoda A."/>
            <person name="Sakaki Y."/>
            <person name="Sakurai T."/>
            <person name="Iida K."/>
            <person name="Akiyama K."/>
            <person name="Satou M."/>
            <person name="Toyoda T."/>
            <person name="Konagaya A."/>
            <person name="Carninci P."/>
            <person name="Kawai J."/>
            <person name="Hayashizaki Y."/>
            <person name="Shinozaki K."/>
        </authorList>
    </citation>
    <scope>NUCLEOTIDE SEQUENCE [LARGE SCALE MRNA]</scope>
    <source>
        <strain>cv. Columbia</strain>
    </source>
</reference>
<reference key="4">
    <citation type="submission" date="2006-06" db="EMBL/GenBank/DDBJ databases">
        <title>Arabidopsis ORF clones.</title>
        <authorList>
            <person name="Kim C.J."/>
            <person name="Chen H."/>
            <person name="Quinitio C."/>
            <person name="Shinn P."/>
            <person name="Ecker J.R."/>
        </authorList>
    </citation>
    <scope>NUCLEOTIDE SEQUENCE [LARGE SCALE MRNA]</scope>
    <source>
        <strain>cv. Columbia</strain>
    </source>
</reference>
<reference key="5">
    <citation type="submission" date="2002-03" db="EMBL/GenBank/DDBJ databases">
        <title>Full-length cDNA from Arabidopsis thaliana.</title>
        <authorList>
            <person name="Brover V.V."/>
            <person name="Troukhan M.E."/>
            <person name="Alexandrov N.A."/>
            <person name="Lu Y.-P."/>
            <person name="Flavell R.B."/>
            <person name="Feldmann K.A."/>
        </authorList>
    </citation>
    <scope>NUCLEOTIDE SEQUENCE [LARGE SCALE MRNA]</scope>
</reference>
<reference key="6">
    <citation type="journal article" date="2007" name="Plant J.">
        <title>Folate salvage in plants: pterin aldehyde reduction is mediated by multiple non-specific aldehyde reductases.</title>
        <authorList>
            <person name="Noiriel A."/>
            <person name="Naponelli V."/>
            <person name="Bozzo G.G."/>
            <person name="Gregory J.F."/>
            <person name="Hanson A.D."/>
        </authorList>
    </citation>
    <scope>FUNCTION</scope>
    <scope>DISRUPTION PHENOTYPE</scope>
    <scope>BIOPHYSICOCHEMICAL PROPERTIES</scope>
    <scope>SUBUNIT</scope>
    <scope>TISSUE SPECIFICITY</scope>
    <scope>SUBCELLULAR LOCATION</scope>
    <source>
        <strain>cv. No-0</strain>
    </source>
</reference>
<reference key="7">
    <citation type="journal article" date="2007" name="Plant Physiol.">
        <title>Pterin and folate salvage. Plants and Escherichia coli lack capacity to reduce oxidized pterins.</title>
        <authorList>
            <person name="Noiriel A."/>
            <person name="Naponelli V."/>
            <person name="Gregory J.F."/>
            <person name="Hanson A.D."/>
        </authorList>
    </citation>
    <scope>FUNCTION</scope>
</reference>
<reference key="8">
    <citation type="journal article" date="2012" name="Mol. Cell. Proteomics">
        <title>Comparative large-scale characterisation of plant vs. mammal proteins reveals similar and idiosyncratic N-alpha acetylation features.</title>
        <authorList>
            <person name="Bienvenut W.V."/>
            <person name="Sumpton D."/>
            <person name="Martinez A."/>
            <person name="Lilla S."/>
            <person name="Espagne C."/>
            <person name="Meinnel T."/>
            <person name="Giglione C."/>
        </authorList>
    </citation>
    <scope>ACETYLATION [LARGE SCALE ANALYSIS] AT THR-2</scope>
    <scope>CLEAVAGE OF INITIATOR METHIONINE [LARGE SCALE ANALYSIS]</scope>
    <scope>IDENTIFICATION BY MASS SPECTROMETRY [LARGE SCALE ANALYSIS]</scope>
</reference>
<keyword id="KW-0007">Acetylation</keyword>
<keyword id="KW-0963">Cytoplasm</keyword>
<keyword id="KW-0521">NADP</keyword>
<keyword id="KW-0560">Oxidoreductase</keyword>
<keyword id="KW-1185">Reference proteome</keyword>
<accession>Q9SY73</accession>
<accession>Q8LA87</accession>
<gene>
    <name evidence="8" type="ordered locus">At1g10310</name>
    <name evidence="9" type="ORF">F14N23.19</name>
</gene>
<name>PTALR_ARATH</name>
<dbReference type="EC" id="1.1.1.-" evidence="7"/>
<dbReference type="EMBL" id="AC005489">
    <property type="protein sequence ID" value="AAD32881.1"/>
    <property type="molecule type" value="Genomic_DNA"/>
</dbReference>
<dbReference type="EMBL" id="CP002684">
    <property type="protein sequence ID" value="AEE28564.1"/>
    <property type="molecule type" value="Genomic_DNA"/>
</dbReference>
<dbReference type="EMBL" id="AK176670">
    <property type="protein sequence ID" value="BAD44433.1"/>
    <property type="molecule type" value="mRNA"/>
</dbReference>
<dbReference type="EMBL" id="BT025789">
    <property type="protein sequence ID" value="ABF83679.1"/>
    <property type="molecule type" value="mRNA"/>
</dbReference>
<dbReference type="EMBL" id="AY087973">
    <property type="protein sequence ID" value="AAM65520.1"/>
    <property type="status" value="ALT_INIT"/>
    <property type="molecule type" value="mRNA"/>
</dbReference>
<dbReference type="PIR" id="C86237">
    <property type="entry name" value="C86237"/>
</dbReference>
<dbReference type="RefSeq" id="NP_563866.1">
    <property type="nucleotide sequence ID" value="NM_100905.4"/>
</dbReference>
<dbReference type="SMR" id="Q9SY73"/>
<dbReference type="FunCoup" id="Q9SY73">
    <property type="interactions" value="70"/>
</dbReference>
<dbReference type="STRING" id="3702.Q9SY73"/>
<dbReference type="iPTMnet" id="Q9SY73"/>
<dbReference type="PaxDb" id="3702-AT1G10310.1"/>
<dbReference type="ProteomicsDB" id="248845"/>
<dbReference type="EnsemblPlants" id="AT1G10310.1">
    <property type="protein sequence ID" value="AT1G10310.1"/>
    <property type="gene ID" value="AT1G10310"/>
</dbReference>
<dbReference type="GeneID" id="837570"/>
<dbReference type="Gramene" id="AT1G10310.1">
    <property type="protein sequence ID" value="AT1G10310.1"/>
    <property type="gene ID" value="AT1G10310"/>
</dbReference>
<dbReference type="KEGG" id="ath:AT1G10310"/>
<dbReference type="Araport" id="AT1G10310"/>
<dbReference type="TAIR" id="AT1G10310"/>
<dbReference type="eggNOG" id="KOG0725">
    <property type="taxonomic scope" value="Eukaryota"/>
</dbReference>
<dbReference type="HOGENOM" id="CLU_010194_2_10_1"/>
<dbReference type="InParanoid" id="Q9SY73"/>
<dbReference type="OMA" id="MARIWFV"/>
<dbReference type="PhylomeDB" id="Q9SY73"/>
<dbReference type="BioCyc" id="ARA:AT1G10310-MONOMER"/>
<dbReference type="PRO" id="PR:Q9SY73"/>
<dbReference type="Proteomes" id="UP000006548">
    <property type="component" value="Chromosome 1"/>
</dbReference>
<dbReference type="ExpressionAtlas" id="Q9SY73">
    <property type="expression patterns" value="baseline and differential"/>
</dbReference>
<dbReference type="GO" id="GO:0005829">
    <property type="term" value="C:cytosol"/>
    <property type="evidence" value="ECO:0000314"/>
    <property type="project" value="TAIR"/>
</dbReference>
<dbReference type="GO" id="GO:0016616">
    <property type="term" value="F:oxidoreductase activity, acting on the CH-OH group of donors, NAD or NADP as acceptor"/>
    <property type="evidence" value="ECO:0000314"/>
    <property type="project" value="TAIR"/>
</dbReference>
<dbReference type="GO" id="GO:0006760">
    <property type="term" value="P:folic acid-containing compound metabolic process"/>
    <property type="evidence" value="ECO:0000314"/>
    <property type="project" value="TAIR"/>
</dbReference>
<dbReference type="CDD" id="cd05233">
    <property type="entry name" value="SDR_c"/>
    <property type="match status" value="1"/>
</dbReference>
<dbReference type="FunFam" id="3.40.50.720:FF:000434">
    <property type="entry name" value="NADPH-dependent pterin aldehyde reductase"/>
    <property type="match status" value="1"/>
</dbReference>
<dbReference type="Gene3D" id="3.40.50.720">
    <property type="entry name" value="NAD(P)-binding Rossmann-like Domain"/>
    <property type="match status" value="1"/>
</dbReference>
<dbReference type="InterPro" id="IPR036291">
    <property type="entry name" value="NAD(P)-bd_dom_sf"/>
</dbReference>
<dbReference type="InterPro" id="IPR053241">
    <property type="entry name" value="NADPH_pterin_aldehyde_rdct"/>
</dbReference>
<dbReference type="InterPro" id="IPR020904">
    <property type="entry name" value="Sc_DH/Rdtase_CS"/>
</dbReference>
<dbReference type="InterPro" id="IPR002347">
    <property type="entry name" value="SDR_fam"/>
</dbReference>
<dbReference type="PANTHER" id="PTHR45267">
    <property type="match status" value="1"/>
</dbReference>
<dbReference type="PANTHER" id="PTHR45267:SF2">
    <property type="entry name" value="NADPH-DEPENDENT PTERIN ALDEHYDE REDUCTASE"/>
    <property type="match status" value="1"/>
</dbReference>
<dbReference type="Pfam" id="PF00106">
    <property type="entry name" value="adh_short"/>
    <property type="match status" value="1"/>
</dbReference>
<dbReference type="PRINTS" id="PR00081">
    <property type="entry name" value="GDHRDH"/>
</dbReference>
<dbReference type="PRINTS" id="PR00080">
    <property type="entry name" value="SDRFAMILY"/>
</dbReference>
<dbReference type="SUPFAM" id="SSF51735">
    <property type="entry name" value="NAD(P)-binding Rossmann-fold domains"/>
    <property type="match status" value="1"/>
</dbReference>
<dbReference type="PROSITE" id="PS00061">
    <property type="entry name" value="ADH_SHORT"/>
    <property type="match status" value="1"/>
</dbReference>